<keyword id="KW-0963">Cytoplasm</keyword>
<keyword id="KW-0350">Heme biosynthesis</keyword>
<keyword id="KW-0479">Metal-binding</keyword>
<keyword id="KW-0560">Oxidoreductase</keyword>
<keyword id="KW-0627">Porphyrin biosynthesis</keyword>
<protein>
    <recommendedName>
        <fullName evidence="1">Oxygen-dependent coproporphyrinogen-III oxidase</fullName>
        <shortName evidence="1">CPO</shortName>
        <shortName evidence="1">Coprogen oxidase</shortName>
        <shortName evidence="1">Coproporphyrinogenase</shortName>
        <ecNumber evidence="1">1.3.3.3</ecNumber>
    </recommendedName>
</protein>
<sequence>MTTRTEAVKAYLLDLQDRICSALETFETDTRFIEDAWTRPAGGGGRTRVIENGSVIEKGGVNFSHVFGSGLPPSASAHRPELAGRGFEALGVSLVIHPHNPHVPTSHANVRFFIAEKEGEEPVWWFGGGFDLTPYYGNEEDCIHWHRVAEQACAPFGPDVYSRYKAWCDTYFHIKHRNEPRGIGGLFFDDLNEWDFDTCFAFIRAIGDAYIDAYLPIVQRRKAMAYTEQQRQFQEFRRGRYVEFNLVYDRGTLFGLQSGGRTESILMSLPPQVRWSYDWKAEVGSEEARLTDYFLQDRDWLGLTAPKAAV</sequence>
<comment type="function">
    <text evidence="1">Involved in the heme biosynthesis. Catalyzes the aerobic oxidative decarboxylation of propionate groups of rings A and B of coproporphyrinogen-III to yield the vinyl groups in protoporphyrinogen-IX.</text>
</comment>
<comment type="catalytic activity">
    <reaction evidence="1">
        <text>coproporphyrinogen III + O2 + 2 H(+) = protoporphyrinogen IX + 2 CO2 + 2 H2O</text>
        <dbReference type="Rhea" id="RHEA:18257"/>
        <dbReference type="ChEBI" id="CHEBI:15377"/>
        <dbReference type="ChEBI" id="CHEBI:15378"/>
        <dbReference type="ChEBI" id="CHEBI:15379"/>
        <dbReference type="ChEBI" id="CHEBI:16526"/>
        <dbReference type="ChEBI" id="CHEBI:57307"/>
        <dbReference type="ChEBI" id="CHEBI:57309"/>
        <dbReference type="EC" id="1.3.3.3"/>
    </reaction>
</comment>
<comment type="cofactor">
    <cofactor evidence="1">
        <name>a divalent metal cation</name>
        <dbReference type="ChEBI" id="CHEBI:60240"/>
    </cofactor>
</comment>
<comment type="pathway">
    <text evidence="1">Porphyrin-containing compound metabolism; protoporphyrin-IX biosynthesis; protoporphyrinogen-IX from coproporphyrinogen-III (O2 route): step 1/1.</text>
</comment>
<comment type="subunit">
    <text evidence="1">Homodimer.</text>
</comment>
<comment type="subcellular location">
    <subcellularLocation>
        <location evidence="1">Cytoplasm</location>
    </subcellularLocation>
</comment>
<comment type="similarity">
    <text evidence="1">Belongs to the aerobic coproporphyrinogen-III oxidase family.</text>
</comment>
<reference key="1">
    <citation type="journal article" date="2009" name="Genome Biol.">
        <title>Genomic and genetic analyses of diversity and plant interactions of Pseudomonas fluorescens.</title>
        <authorList>
            <person name="Silby M.W."/>
            <person name="Cerdeno-Tarraga A.M."/>
            <person name="Vernikos G.S."/>
            <person name="Giddens S.R."/>
            <person name="Jackson R.W."/>
            <person name="Preston G.M."/>
            <person name="Zhang X.-X."/>
            <person name="Moon C.D."/>
            <person name="Gehrig S.M."/>
            <person name="Godfrey S.A.C."/>
            <person name="Knight C.G."/>
            <person name="Malone J.G."/>
            <person name="Robinson Z."/>
            <person name="Spiers A.J."/>
            <person name="Harris S."/>
            <person name="Challis G.L."/>
            <person name="Yaxley A.M."/>
            <person name="Harris D."/>
            <person name="Seeger K."/>
            <person name="Murphy L."/>
            <person name="Rutter S."/>
            <person name="Squares R."/>
            <person name="Quail M.A."/>
            <person name="Saunders E."/>
            <person name="Mavromatis K."/>
            <person name="Brettin T.S."/>
            <person name="Bentley S.D."/>
            <person name="Hothersall J."/>
            <person name="Stephens E."/>
            <person name="Thomas C.M."/>
            <person name="Parkhill J."/>
            <person name="Levy S.B."/>
            <person name="Rainey P.B."/>
            <person name="Thomson N.R."/>
        </authorList>
    </citation>
    <scope>NUCLEOTIDE SEQUENCE [LARGE SCALE GENOMIC DNA]</scope>
    <source>
        <strain>SBW25</strain>
    </source>
</reference>
<proteinExistence type="inferred from homology"/>
<dbReference type="EC" id="1.3.3.3" evidence="1"/>
<dbReference type="EMBL" id="AM181176">
    <property type="protein sequence ID" value="CAY46308.1"/>
    <property type="molecule type" value="Genomic_DNA"/>
</dbReference>
<dbReference type="RefSeq" id="WP_012721470.1">
    <property type="nucleotide sequence ID" value="NC_012660.1"/>
</dbReference>
<dbReference type="SMR" id="C3K4I0"/>
<dbReference type="STRING" id="294.SRM1_00083"/>
<dbReference type="PATRIC" id="fig|216595.4.peg.265"/>
<dbReference type="eggNOG" id="COG0408">
    <property type="taxonomic scope" value="Bacteria"/>
</dbReference>
<dbReference type="HOGENOM" id="CLU_026169_0_1_6"/>
<dbReference type="OrthoDB" id="9777553at2"/>
<dbReference type="UniPathway" id="UPA00251">
    <property type="reaction ID" value="UER00322"/>
</dbReference>
<dbReference type="GO" id="GO:0005737">
    <property type="term" value="C:cytoplasm"/>
    <property type="evidence" value="ECO:0007669"/>
    <property type="project" value="UniProtKB-SubCell"/>
</dbReference>
<dbReference type="GO" id="GO:0004109">
    <property type="term" value="F:coproporphyrinogen oxidase activity"/>
    <property type="evidence" value="ECO:0007669"/>
    <property type="project" value="UniProtKB-UniRule"/>
</dbReference>
<dbReference type="GO" id="GO:0046872">
    <property type="term" value="F:metal ion binding"/>
    <property type="evidence" value="ECO:0007669"/>
    <property type="project" value="UniProtKB-KW"/>
</dbReference>
<dbReference type="GO" id="GO:0042803">
    <property type="term" value="F:protein homodimerization activity"/>
    <property type="evidence" value="ECO:0000250"/>
    <property type="project" value="UniProtKB"/>
</dbReference>
<dbReference type="GO" id="GO:0006782">
    <property type="term" value="P:protoporphyrinogen IX biosynthetic process"/>
    <property type="evidence" value="ECO:0007669"/>
    <property type="project" value="UniProtKB-UniRule"/>
</dbReference>
<dbReference type="FunFam" id="3.40.1500.10:FF:000001">
    <property type="entry name" value="Oxygen-dependent coproporphyrinogen-III oxidase"/>
    <property type="match status" value="1"/>
</dbReference>
<dbReference type="Gene3D" id="3.40.1500.10">
    <property type="entry name" value="Coproporphyrinogen III oxidase, aerobic"/>
    <property type="match status" value="1"/>
</dbReference>
<dbReference type="HAMAP" id="MF_00333">
    <property type="entry name" value="Coprogen_oxidas"/>
    <property type="match status" value="1"/>
</dbReference>
<dbReference type="InterPro" id="IPR001260">
    <property type="entry name" value="Coprogen_oxidase_aer"/>
</dbReference>
<dbReference type="InterPro" id="IPR036406">
    <property type="entry name" value="Coprogen_oxidase_aer_sf"/>
</dbReference>
<dbReference type="InterPro" id="IPR018375">
    <property type="entry name" value="Coprogen_oxidase_CS"/>
</dbReference>
<dbReference type="NCBIfam" id="NF003727">
    <property type="entry name" value="PRK05330.1"/>
    <property type="match status" value="1"/>
</dbReference>
<dbReference type="PANTHER" id="PTHR10755">
    <property type="entry name" value="COPROPORPHYRINOGEN III OXIDASE, MITOCHONDRIAL"/>
    <property type="match status" value="1"/>
</dbReference>
<dbReference type="PANTHER" id="PTHR10755:SF0">
    <property type="entry name" value="OXYGEN-DEPENDENT COPROPORPHYRINOGEN-III OXIDASE, MITOCHONDRIAL"/>
    <property type="match status" value="1"/>
</dbReference>
<dbReference type="Pfam" id="PF01218">
    <property type="entry name" value="Coprogen_oxidas"/>
    <property type="match status" value="1"/>
</dbReference>
<dbReference type="PIRSF" id="PIRSF000166">
    <property type="entry name" value="Coproporphyri_ox"/>
    <property type="match status" value="1"/>
</dbReference>
<dbReference type="PRINTS" id="PR00073">
    <property type="entry name" value="COPRGNOXDASE"/>
</dbReference>
<dbReference type="SUPFAM" id="SSF102886">
    <property type="entry name" value="Coproporphyrinogen III oxidase"/>
    <property type="match status" value="1"/>
</dbReference>
<dbReference type="PROSITE" id="PS01021">
    <property type="entry name" value="COPROGEN_OXIDASE"/>
    <property type="match status" value="1"/>
</dbReference>
<feature type="chain" id="PRO_1000205204" description="Oxygen-dependent coproporphyrinogen-III oxidase">
    <location>
        <begin position="1"/>
        <end position="310"/>
    </location>
</feature>
<feature type="region of interest" description="Important for dimerization" evidence="1">
    <location>
        <begin position="241"/>
        <end position="276"/>
    </location>
</feature>
<feature type="active site" description="Proton donor" evidence="1">
    <location>
        <position position="107"/>
    </location>
</feature>
<feature type="binding site" evidence="1">
    <location>
        <position position="93"/>
    </location>
    <ligand>
        <name>substrate</name>
    </ligand>
</feature>
<feature type="binding site" evidence="1">
    <location>
        <position position="97"/>
    </location>
    <ligand>
        <name>a divalent metal cation</name>
        <dbReference type="ChEBI" id="CHEBI:60240"/>
    </ligand>
</feature>
<feature type="binding site" evidence="1">
    <location>
        <position position="107"/>
    </location>
    <ligand>
        <name>a divalent metal cation</name>
        <dbReference type="ChEBI" id="CHEBI:60240"/>
    </ligand>
</feature>
<feature type="binding site" evidence="1">
    <location>
        <begin position="109"/>
        <end position="111"/>
    </location>
    <ligand>
        <name>substrate</name>
    </ligand>
</feature>
<feature type="binding site" evidence="1">
    <location>
        <position position="146"/>
    </location>
    <ligand>
        <name>a divalent metal cation</name>
        <dbReference type="ChEBI" id="CHEBI:60240"/>
    </ligand>
</feature>
<feature type="binding site" evidence="1">
    <location>
        <position position="176"/>
    </location>
    <ligand>
        <name>a divalent metal cation</name>
        <dbReference type="ChEBI" id="CHEBI:60240"/>
    </ligand>
</feature>
<feature type="binding site" evidence="1">
    <location>
        <begin position="259"/>
        <end position="261"/>
    </location>
    <ligand>
        <name>substrate</name>
    </ligand>
</feature>
<feature type="site" description="Important for dimerization" evidence="1">
    <location>
        <position position="176"/>
    </location>
</feature>
<gene>
    <name evidence="1" type="primary">hemF</name>
    <name type="ordered locus">PFLU_0023</name>
</gene>
<organism>
    <name type="scientific">Pseudomonas fluorescens (strain SBW25)</name>
    <dbReference type="NCBI Taxonomy" id="216595"/>
    <lineage>
        <taxon>Bacteria</taxon>
        <taxon>Pseudomonadati</taxon>
        <taxon>Pseudomonadota</taxon>
        <taxon>Gammaproteobacteria</taxon>
        <taxon>Pseudomonadales</taxon>
        <taxon>Pseudomonadaceae</taxon>
        <taxon>Pseudomonas</taxon>
    </lineage>
</organism>
<evidence type="ECO:0000255" key="1">
    <source>
        <dbReference type="HAMAP-Rule" id="MF_00333"/>
    </source>
</evidence>
<name>HEM6_PSEFS</name>
<accession>C3K4I0</accession>